<gene>
    <name evidence="1" type="primary">panC</name>
    <name type="ordered locus">Mlg_0565</name>
</gene>
<sequence>MKRLKRTADLRALVADWRREGLRVGLVPTMGNLHEGHLALAEYLAPHCDRLVTSIFVNPLQFGPNEDYESYPRTFGEDCAGLEARGVDAVFAPPVEEMYRGGVRQATRVEVGALAERLCGISRPGHFTGVATVVVKLFNLVQPDVAVFGRKDYQQLRVIEQVVSDLNIPVEVRGMPTVREPDGLAMSSRNGYLTQQERHIAPGLYRTLQGMAKRIRAGDDDYRRLEARGRAMLAEQGFQPDYLEVCRADDLTPAAPGDRGLVVAGAAWLGRARLIDNIELELNRDQ</sequence>
<name>PANC_ALKEH</name>
<organism>
    <name type="scientific">Alkalilimnicola ehrlichii (strain ATCC BAA-1101 / DSM 17681 / MLHE-1)</name>
    <dbReference type="NCBI Taxonomy" id="187272"/>
    <lineage>
        <taxon>Bacteria</taxon>
        <taxon>Pseudomonadati</taxon>
        <taxon>Pseudomonadota</taxon>
        <taxon>Gammaproteobacteria</taxon>
        <taxon>Chromatiales</taxon>
        <taxon>Ectothiorhodospiraceae</taxon>
        <taxon>Alkalilimnicola</taxon>
    </lineage>
</organism>
<dbReference type="EC" id="6.3.2.1" evidence="1"/>
<dbReference type="EMBL" id="CP000453">
    <property type="protein sequence ID" value="ABI55919.1"/>
    <property type="molecule type" value="Genomic_DNA"/>
</dbReference>
<dbReference type="RefSeq" id="WP_011628314.1">
    <property type="nucleotide sequence ID" value="NC_008340.1"/>
</dbReference>
<dbReference type="SMR" id="Q0AB68"/>
<dbReference type="KEGG" id="aeh:Mlg_0565"/>
<dbReference type="eggNOG" id="COG0414">
    <property type="taxonomic scope" value="Bacteria"/>
</dbReference>
<dbReference type="HOGENOM" id="CLU_047148_0_0_6"/>
<dbReference type="OrthoDB" id="9773087at2"/>
<dbReference type="UniPathway" id="UPA00028">
    <property type="reaction ID" value="UER00005"/>
</dbReference>
<dbReference type="Proteomes" id="UP000001962">
    <property type="component" value="Chromosome"/>
</dbReference>
<dbReference type="GO" id="GO:0005829">
    <property type="term" value="C:cytosol"/>
    <property type="evidence" value="ECO:0007669"/>
    <property type="project" value="TreeGrafter"/>
</dbReference>
<dbReference type="GO" id="GO:0005524">
    <property type="term" value="F:ATP binding"/>
    <property type="evidence" value="ECO:0007669"/>
    <property type="project" value="UniProtKB-KW"/>
</dbReference>
<dbReference type="GO" id="GO:0004592">
    <property type="term" value="F:pantoate-beta-alanine ligase activity"/>
    <property type="evidence" value="ECO:0007669"/>
    <property type="project" value="UniProtKB-UniRule"/>
</dbReference>
<dbReference type="GO" id="GO:0015940">
    <property type="term" value="P:pantothenate biosynthetic process"/>
    <property type="evidence" value="ECO:0007669"/>
    <property type="project" value="UniProtKB-UniRule"/>
</dbReference>
<dbReference type="CDD" id="cd00560">
    <property type="entry name" value="PanC"/>
    <property type="match status" value="1"/>
</dbReference>
<dbReference type="FunFam" id="3.30.1300.10:FF:000001">
    <property type="entry name" value="Pantothenate synthetase"/>
    <property type="match status" value="1"/>
</dbReference>
<dbReference type="FunFam" id="3.40.50.620:FF:000013">
    <property type="entry name" value="Pantothenate synthetase"/>
    <property type="match status" value="1"/>
</dbReference>
<dbReference type="Gene3D" id="3.40.50.620">
    <property type="entry name" value="HUPs"/>
    <property type="match status" value="1"/>
</dbReference>
<dbReference type="Gene3D" id="3.30.1300.10">
    <property type="entry name" value="Pantoate-beta-alanine ligase, C-terminal domain"/>
    <property type="match status" value="1"/>
</dbReference>
<dbReference type="HAMAP" id="MF_00158">
    <property type="entry name" value="PanC"/>
    <property type="match status" value="1"/>
</dbReference>
<dbReference type="InterPro" id="IPR003721">
    <property type="entry name" value="Pantoate_ligase"/>
</dbReference>
<dbReference type="InterPro" id="IPR042176">
    <property type="entry name" value="Pantoate_ligase_C"/>
</dbReference>
<dbReference type="InterPro" id="IPR014729">
    <property type="entry name" value="Rossmann-like_a/b/a_fold"/>
</dbReference>
<dbReference type="NCBIfam" id="TIGR00018">
    <property type="entry name" value="panC"/>
    <property type="match status" value="1"/>
</dbReference>
<dbReference type="PANTHER" id="PTHR21299">
    <property type="entry name" value="CYTIDYLATE KINASE/PANTOATE-BETA-ALANINE LIGASE"/>
    <property type="match status" value="1"/>
</dbReference>
<dbReference type="PANTHER" id="PTHR21299:SF1">
    <property type="entry name" value="PANTOATE--BETA-ALANINE LIGASE"/>
    <property type="match status" value="1"/>
</dbReference>
<dbReference type="Pfam" id="PF02569">
    <property type="entry name" value="Pantoate_ligase"/>
    <property type="match status" value="1"/>
</dbReference>
<dbReference type="SUPFAM" id="SSF52374">
    <property type="entry name" value="Nucleotidylyl transferase"/>
    <property type="match status" value="1"/>
</dbReference>
<keyword id="KW-0067">ATP-binding</keyword>
<keyword id="KW-0963">Cytoplasm</keyword>
<keyword id="KW-0436">Ligase</keyword>
<keyword id="KW-0547">Nucleotide-binding</keyword>
<keyword id="KW-0566">Pantothenate biosynthesis</keyword>
<keyword id="KW-1185">Reference proteome</keyword>
<proteinExistence type="inferred from homology"/>
<accession>Q0AB68</accession>
<evidence type="ECO:0000255" key="1">
    <source>
        <dbReference type="HAMAP-Rule" id="MF_00158"/>
    </source>
</evidence>
<comment type="function">
    <text evidence="1">Catalyzes the condensation of pantoate with beta-alanine in an ATP-dependent reaction via a pantoyl-adenylate intermediate.</text>
</comment>
<comment type="catalytic activity">
    <reaction evidence="1">
        <text>(R)-pantoate + beta-alanine + ATP = (R)-pantothenate + AMP + diphosphate + H(+)</text>
        <dbReference type="Rhea" id="RHEA:10912"/>
        <dbReference type="ChEBI" id="CHEBI:15378"/>
        <dbReference type="ChEBI" id="CHEBI:15980"/>
        <dbReference type="ChEBI" id="CHEBI:29032"/>
        <dbReference type="ChEBI" id="CHEBI:30616"/>
        <dbReference type="ChEBI" id="CHEBI:33019"/>
        <dbReference type="ChEBI" id="CHEBI:57966"/>
        <dbReference type="ChEBI" id="CHEBI:456215"/>
        <dbReference type="EC" id="6.3.2.1"/>
    </reaction>
</comment>
<comment type="pathway">
    <text evidence="1">Cofactor biosynthesis; (R)-pantothenate biosynthesis; (R)-pantothenate from (R)-pantoate and beta-alanine: step 1/1.</text>
</comment>
<comment type="subunit">
    <text evidence="1">Homodimer.</text>
</comment>
<comment type="subcellular location">
    <subcellularLocation>
        <location evidence="1">Cytoplasm</location>
    </subcellularLocation>
</comment>
<comment type="miscellaneous">
    <text evidence="1">The reaction proceeds by a bi uni uni bi ping pong mechanism.</text>
</comment>
<comment type="similarity">
    <text evidence="1">Belongs to the pantothenate synthetase family.</text>
</comment>
<feature type="chain" id="PRO_0000305389" description="Pantothenate synthetase">
    <location>
        <begin position="1"/>
        <end position="286"/>
    </location>
</feature>
<feature type="active site" description="Proton donor" evidence="1">
    <location>
        <position position="37"/>
    </location>
</feature>
<feature type="binding site" evidence="1">
    <location>
        <begin position="30"/>
        <end position="37"/>
    </location>
    <ligand>
        <name>ATP</name>
        <dbReference type="ChEBI" id="CHEBI:30616"/>
    </ligand>
</feature>
<feature type="binding site" evidence="1">
    <location>
        <position position="61"/>
    </location>
    <ligand>
        <name>(R)-pantoate</name>
        <dbReference type="ChEBI" id="CHEBI:15980"/>
    </ligand>
</feature>
<feature type="binding site" evidence="1">
    <location>
        <position position="61"/>
    </location>
    <ligand>
        <name>beta-alanine</name>
        <dbReference type="ChEBI" id="CHEBI:57966"/>
    </ligand>
</feature>
<feature type="binding site" evidence="1">
    <location>
        <begin position="149"/>
        <end position="152"/>
    </location>
    <ligand>
        <name>ATP</name>
        <dbReference type="ChEBI" id="CHEBI:30616"/>
    </ligand>
</feature>
<feature type="binding site" evidence="1">
    <location>
        <position position="155"/>
    </location>
    <ligand>
        <name>(R)-pantoate</name>
        <dbReference type="ChEBI" id="CHEBI:15980"/>
    </ligand>
</feature>
<feature type="binding site" evidence="1">
    <location>
        <position position="178"/>
    </location>
    <ligand>
        <name>ATP</name>
        <dbReference type="ChEBI" id="CHEBI:30616"/>
    </ligand>
</feature>
<feature type="binding site" evidence="1">
    <location>
        <begin position="186"/>
        <end position="189"/>
    </location>
    <ligand>
        <name>ATP</name>
        <dbReference type="ChEBI" id="CHEBI:30616"/>
    </ligand>
</feature>
<protein>
    <recommendedName>
        <fullName evidence="1">Pantothenate synthetase</fullName>
        <shortName evidence="1">PS</shortName>
        <ecNumber evidence="1">6.3.2.1</ecNumber>
    </recommendedName>
    <alternativeName>
        <fullName evidence="1">Pantoate--beta-alanine ligase</fullName>
    </alternativeName>
    <alternativeName>
        <fullName evidence="1">Pantoate-activating enzyme</fullName>
    </alternativeName>
</protein>
<reference key="1">
    <citation type="submission" date="2006-08" db="EMBL/GenBank/DDBJ databases">
        <title>Complete sequence of Alkalilimnicola ehrilichei MLHE-1.</title>
        <authorList>
            <person name="Copeland A."/>
            <person name="Lucas S."/>
            <person name="Lapidus A."/>
            <person name="Barry K."/>
            <person name="Detter J.C."/>
            <person name="Glavina del Rio T."/>
            <person name="Hammon N."/>
            <person name="Israni S."/>
            <person name="Dalin E."/>
            <person name="Tice H."/>
            <person name="Pitluck S."/>
            <person name="Sims D."/>
            <person name="Brettin T."/>
            <person name="Bruce D."/>
            <person name="Han C."/>
            <person name="Tapia R."/>
            <person name="Gilna P."/>
            <person name="Schmutz J."/>
            <person name="Larimer F."/>
            <person name="Land M."/>
            <person name="Hauser L."/>
            <person name="Kyrpides N."/>
            <person name="Mikhailova N."/>
            <person name="Oremland R.S."/>
            <person name="Hoeft S.E."/>
            <person name="Switzer-Blum J."/>
            <person name="Kulp T."/>
            <person name="King G."/>
            <person name="Tabita R."/>
            <person name="Witte B."/>
            <person name="Santini J.M."/>
            <person name="Basu P."/>
            <person name="Hollibaugh J.T."/>
            <person name="Xie G."/>
            <person name="Stolz J.F."/>
            <person name="Richardson P."/>
        </authorList>
    </citation>
    <scope>NUCLEOTIDE SEQUENCE [LARGE SCALE GENOMIC DNA]</scope>
    <source>
        <strain>ATCC BAA-1101 / DSM 17681 / MLHE-1</strain>
    </source>
</reference>